<keyword id="KW-1185">Reference proteome</keyword>
<keyword id="KW-0687">Ribonucleoprotein</keyword>
<keyword id="KW-0689">Ribosomal protein</keyword>
<organism>
    <name type="scientific">Campylobacter lari (strain RM2100 / D67 / ATCC BAA-1060)</name>
    <dbReference type="NCBI Taxonomy" id="306263"/>
    <lineage>
        <taxon>Bacteria</taxon>
        <taxon>Pseudomonadati</taxon>
        <taxon>Campylobacterota</taxon>
        <taxon>Epsilonproteobacteria</taxon>
        <taxon>Campylobacterales</taxon>
        <taxon>Campylobacteraceae</taxon>
        <taxon>Campylobacter</taxon>
    </lineage>
</organism>
<gene>
    <name evidence="1" type="primary">rplS</name>
    <name type="ordered locus">Cla_0992</name>
</gene>
<proteinExistence type="inferred from homology"/>
<name>RL19_CAMLR</name>
<comment type="function">
    <text evidence="1">This protein is located at the 30S-50S ribosomal subunit interface and may play a role in the structure and function of the aminoacyl-tRNA binding site.</text>
</comment>
<comment type="similarity">
    <text evidence="1">Belongs to the bacterial ribosomal protein bL19 family.</text>
</comment>
<accession>B9KCM6</accession>
<protein>
    <recommendedName>
        <fullName evidence="1">Large ribosomal subunit protein bL19</fullName>
    </recommendedName>
    <alternativeName>
        <fullName evidence="2">50S ribosomal protein L19</fullName>
    </alternativeName>
</protein>
<dbReference type="EMBL" id="CP000932">
    <property type="protein sequence ID" value="ACM64315.1"/>
    <property type="molecule type" value="Genomic_DNA"/>
</dbReference>
<dbReference type="RefSeq" id="WP_012661698.1">
    <property type="nucleotide sequence ID" value="NC_012039.1"/>
</dbReference>
<dbReference type="SMR" id="B9KCM6"/>
<dbReference type="STRING" id="306263.Cla_0992"/>
<dbReference type="GeneID" id="93005031"/>
<dbReference type="KEGG" id="cla:CLA_0992"/>
<dbReference type="eggNOG" id="COG0335">
    <property type="taxonomic scope" value="Bacteria"/>
</dbReference>
<dbReference type="HOGENOM" id="CLU_103507_2_2_7"/>
<dbReference type="Proteomes" id="UP000007727">
    <property type="component" value="Chromosome"/>
</dbReference>
<dbReference type="GO" id="GO:0022625">
    <property type="term" value="C:cytosolic large ribosomal subunit"/>
    <property type="evidence" value="ECO:0007669"/>
    <property type="project" value="TreeGrafter"/>
</dbReference>
<dbReference type="GO" id="GO:0003735">
    <property type="term" value="F:structural constituent of ribosome"/>
    <property type="evidence" value="ECO:0007669"/>
    <property type="project" value="InterPro"/>
</dbReference>
<dbReference type="GO" id="GO:0006412">
    <property type="term" value="P:translation"/>
    <property type="evidence" value="ECO:0007669"/>
    <property type="project" value="UniProtKB-UniRule"/>
</dbReference>
<dbReference type="FunFam" id="2.30.30.790:FF:000001">
    <property type="entry name" value="50S ribosomal protein L19"/>
    <property type="match status" value="1"/>
</dbReference>
<dbReference type="Gene3D" id="2.30.30.790">
    <property type="match status" value="1"/>
</dbReference>
<dbReference type="HAMAP" id="MF_00402">
    <property type="entry name" value="Ribosomal_bL19"/>
    <property type="match status" value="1"/>
</dbReference>
<dbReference type="InterPro" id="IPR001857">
    <property type="entry name" value="Ribosomal_bL19"/>
</dbReference>
<dbReference type="InterPro" id="IPR018257">
    <property type="entry name" value="Ribosomal_bL19_CS"/>
</dbReference>
<dbReference type="InterPro" id="IPR038657">
    <property type="entry name" value="Ribosomal_bL19_sf"/>
</dbReference>
<dbReference type="InterPro" id="IPR008991">
    <property type="entry name" value="Translation_prot_SH3-like_sf"/>
</dbReference>
<dbReference type="NCBIfam" id="TIGR01024">
    <property type="entry name" value="rplS_bact"/>
    <property type="match status" value="1"/>
</dbReference>
<dbReference type="PANTHER" id="PTHR15680:SF9">
    <property type="entry name" value="LARGE RIBOSOMAL SUBUNIT PROTEIN BL19M"/>
    <property type="match status" value="1"/>
</dbReference>
<dbReference type="PANTHER" id="PTHR15680">
    <property type="entry name" value="RIBOSOMAL PROTEIN L19"/>
    <property type="match status" value="1"/>
</dbReference>
<dbReference type="Pfam" id="PF01245">
    <property type="entry name" value="Ribosomal_L19"/>
    <property type="match status" value="1"/>
</dbReference>
<dbReference type="PIRSF" id="PIRSF002191">
    <property type="entry name" value="Ribosomal_L19"/>
    <property type="match status" value="1"/>
</dbReference>
<dbReference type="PRINTS" id="PR00061">
    <property type="entry name" value="RIBOSOMALL19"/>
</dbReference>
<dbReference type="SUPFAM" id="SSF50104">
    <property type="entry name" value="Translation proteins SH3-like domain"/>
    <property type="match status" value="1"/>
</dbReference>
<dbReference type="PROSITE" id="PS01015">
    <property type="entry name" value="RIBOSOMAL_L19"/>
    <property type="match status" value="1"/>
</dbReference>
<feature type="chain" id="PRO_1000134561" description="Large ribosomal subunit protein bL19">
    <location>
        <begin position="1"/>
        <end position="118"/>
    </location>
</feature>
<sequence>MKNKYIEQFEQKQIEGKNVPEFRAGDTLRLAIRIKEGDKTRIQNFEGICIARRGNGVDETFIVRKIGANNVGVERIFPIYSESLESITVLRRGRVRRARLFYLRDRRGKAARIKELKK</sequence>
<evidence type="ECO:0000255" key="1">
    <source>
        <dbReference type="HAMAP-Rule" id="MF_00402"/>
    </source>
</evidence>
<evidence type="ECO:0000305" key="2"/>
<reference key="1">
    <citation type="journal article" date="2008" name="Foodborne Pathog. Dis.">
        <title>The complete genome sequence and analysis of the human pathogen Campylobacter lari.</title>
        <authorList>
            <person name="Miller W.G."/>
            <person name="Wang G."/>
            <person name="Binnewies T.T."/>
            <person name="Parker C.T."/>
        </authorList>
    </citation>
    <scope>NUCLEOTIDE SEQUENCE [LARGE SCALE GENOMIC DNA]</scope>
    <source>
        <strain>RM2100 / D67 / ATCC BAA-1060</strain>
    </source>
</reference>